<organism>
    <name type="scientific">Ehrlichia ruminantium (strain Welgevonden)</name>
    <dbReference type="NCBI Taxonomy" id="254945"/>
    <lineage>
        <taxon>Bacteria</taxon>
        <taxon>Pseudomonadati</taxon>
        <taxon>Pseudomonadota</taxon>
        <taxon>Alphaproteobacteria</taxon>
        <taxon>Rickettsiales</taxon>
        <taxon>Anaplasmataceae</taxon>
        <taxon>Ehrlichia</taxon>
    </lineage>
</organism>
<comment type="catalytic activity">
    <reaction evidence="1">
        <text>2 reduced [2Fe-2S]-[ferredoxin] + NADP(+) + H(+) = 2 oxidized [2Fe-2S]-[ferredoxin] + NADPH</text>
        <dbReference type="Rhea" id="RHEA:20125"/>
        <dbReference type="Rhea" id="RHEA-COMP:10000"/>
        <dbReference type="Rhea" id="RHEA-COMP:10001"/>
        <dbReference type="ChEBI" id="CHEBI:15378"/>
        <dbReference type="ChEBI" id="CHEBI:33737"/>
        <dbReference type="ChEBI" id="CHEBI:33738"/>
        <dbReference type="ChEBI" id="CHEBI:57783"/>
        <dbReference type="ChEBI" id="CHEBI:58349"/>
        <dbReference type="EC" id="1.18.1.2"/>
    </reaction>
</comment>
<comment type="cofactor">
    <cofactor evidence="1">
        <name>FAD</name>
        <dbReference type="ChEBI" id="CHEBI:57692"/>
    </cofactor>
    <text evidence="1">Binds 1 FAD per subunit.</text>
</comment>
<comment type="subunit">
    <text evidence="1">Homodimer.</text>
</comment>
<comment type="similarity">
    <text evidence="1">Belongs to the ferredoxin--NADP reductase type 2 family.</text>
</comment>
<dbReference type="EC" id="1.18.1.2" evidence="1"/>
<dbReference type="EMBL" id="CR767821">
    <property type="protein sequence ID" value="CAH58124.1"/>
    <property type="molecule type" value="Genomic_DNA"/>
</dbReference>
<dbReference type="EMBL" id="CR925678">
    <property type="protein sequence ID" value="CAI26909.1"/>
    <property type="molecule type" value="Genomic_DNA"/>
</dbReference>
<dbReference type="RefSeq" id="WP_011155084.1">
    <property type="nucleotide sequence ID" value="NC_005295.2"/>
</dbReference>
<dbReference type="SMR" id="Q5HBC7"/>
<dbReference type="GeneID" id="33058005"/>
<dbReference type="KEGG" id="eru:Erum4020"/>
<dbReference type="KEGG" id="erw:ERWE_CDS_04150"/>
<dbReference type="eggNOG" id="COG0492">
    <property type="taxonomic scope" value="Bacteria"/>
</dbReference>
<dbReference type="HOGENOM" id="CLU_031864_5_5_5"/>
<dbReference type="Proteomes" id="UP000001021">
    <property type="component" value="Chromosome"/>
</dbReference>
<dbReference type="GO" id="GO:0004324">
    <property type="term" value="F:ferredoxin-NADP+ reductase activity"/>
    <property type="evidence" value="ECO:0007669"/>
    <property type="project" value="UniProtKB-UniRule"/>
</dbReference>
<dbReference type="GO" id="GO:0050660">
    <property type="term" value="F:flavin adenine dinucleotide binding"/>
    <property type="evidence" value="ECO:0007669"/>
    <property type="project" value="UniProtKB-UniRule"/>
</dbReference>
<dbReference type="GO" id="GO:0050661">
    <property type="term" value="F:NADP binding"/>
    <property type="evidence" value="ECO:0007669"/>
    <property type="project" value="UniProtKB-UniRule"/>
</dbReference>
<dbReference type="Gene3D" id="3.50.50.60">
    <property type="entry name" value="FAD/NAD(P)-binding domain"/>
    <property type="match status" value="2"/>
</dbReference>
<dbReference type="HAMAP" id="MF_01685">
    <property type="entry name" value="FENR2"/>
    <property type="match status" value="1"/>
</dbReference>
<dbReference type="InterPro" id="IPR036188">
    <property type="entry name" value="FAD/NAD-bd_sf"/>
</dbReference>
<dbReference type="InterPro" id="IPR023753">
    <property type="entry name" value="FAD/NAD-binding_dom"/>
</dbReference>
<dbReference type="InterPro" id="IPR022890">
    <property type="entry name" value="Fd--NADP_Rdtase_type_2"/>
</dbReference>
<dbReference type="InterPro" id="IPR050097">
    <property type="entry name" value="Ferredoxin-NADP_redctase_2"/>
</dbReference>
<dbReference type="PANTHER" id="PTHR48105">
    <property type="entry name" value="THIOREDOXIN REDUCTASE 1-RELATED-RELATED"/>
    <property type="match status" value="1"/>
</dbReference>
<dbReference type="Pfam" id="PF07992">
    <property type="entry name" value="Pyr_redox_2"/>
    <property type="match status" value="1"/>
</dbReference>
<dbReference type="PRINTS" id="PR00368">
    <property type="entry name" value="FADPNR"/>
</dbReference>
<dbReference type="PRINTS" id="PR00469">
    <property type="entry name" value="PNDRDTASEII"/>
</dbReference>
<dbReference type="SUPFAM" id="SSF51905">
    <property type="entry name" value="FAD/NAD(P)-binding domain"/>
    <property type="match status" value="1"/>
</dbReference>
<accession>Q5HBC7</accession>
<accession>Q5FDS0</accession>
<gene>
    <name type="ordered locus">Erum4020</name>
    <name type="ordered locus">ERWE_CDS_04150</name>
</gene>
<feature type="chain" id="PRO_0000364832" description="Ferredoxin--NADP reductase">
    <location>
        <begin position="1"/>
        <end position="337"/>
    </location>
</feature>
<feature type="binding site" evidence="1">
    <location>
        <position position="35"/>
    </location>
    <ligand>
        <name>FAD</name>
        <dbReference type="ChEBI" id="CHEBI:57692"/>
    </ligand>
</feature>
<feature type="binding site" evidence="1">
    <location>
        <position position="43"/>
    </location>
    <ligand>
        <name>FAD</name>
        <dbReference type="ChEBI" id="CHEBI:57692"/>
    </ligand>
</feature>
<feature type="binding site" evidence="1">
    <location>
        <position position="48"/>
    </location>
    <ligand>
        <name>FAD</name>
        <dbReference type="ChEBI" id="CHEBI:57692"/>
    </ligand>
</feature>
<feature type="binding site" evidence="1">
    <location>
        <position position="88"/>
    </location>
    <ligand>
        <name>FAD</name>
        <dbReference type="ChEBI" id="CHEBI:57692"/>
    </ligand>
</feature>
<feature type="binding site" evidence="1">
    <location>
        <position position="122"/>
    </location>
    <ligand>
        <name>FAD</name>
        <dbReference type="ChEBI" id="CHEBI:57692"/>
    </ligand>
</feature>
<feature type="binding site" evidence="1">
    <location>
        <position position="289"/>
    </location>
    <ligand>
        <name>FAD</name>
        <dbReference type="ChEBI" id="CHEBI:57692"/>
    </ligand>
</feature>
<feature type="binding site" evidence="1">
    <location>
        <position position="330"/>
    </location>
    <ligand>
        <name>FAD</name>
        <dbReference type="ChEBI" id="CHEBI:57692"/>
    </ligand>
</feature>
<reference key="1">
    <citation type="journal article" date="2005" name="Proc. Natl. Acad. Sci. U.S.A.">
        <title>The genome of the heartwater agent Ehrlichia ruminantium contains multiple tandem repeats of actively variable copy number.</title>
        <authorList>
            <person name="Collins N.E."/>
            <person name="Liebenberg J."/>
            <person name="de Villiers E.P."/>
            <person name="Brayton K.A."/>
            <person name="Louw E."/>
            <person name="Pretorius A."/>
            <person name="Faber F.E."/>
            <person name="van Heerden H."/>
            <person name="Josemans A."/>
            <person name="van Kleef M."/>
            <person name="Steyn H.C."/>
            <person name="van Strijp M.F."/>
            <person name="Zweygarth E."/>
            <person name="Jongejan F."/>
            <person name="Maillard J.C."/>
            <person name="Berthier D."/>
            <person name="Botha M."/>
            <person name="Joubert F."/>
            <person name="Corton C.H."/>
            <person name="Thomson N.R."/>
            <person name="Allsopp M.T."/>
            <person name="Allsopp B.A."/>
        </authorList>
    </citation>
    <scope>NUCLEOTIDE SEQUENCE [LARGE SCALE GENOMIC DNA]</scope>
    <source>
        <strain>Welgevonden</strain>
    </source>
</reference>
<reference key="2">
    <citation type="journal article" date="2006" name="J. Bacteriol.">
        <title>Comparative genomic analysis of three strains of Ehrlichia ruminantium reveals an active process of genome size plasticity.</title>
        <authorList>
            <person name="Frutos R."/>
            <person name="Viari A."/>
            <person name="Ferraz C."/>
            <person name="Morgat A."/>
            <person name="Eychenie S."/>
            <person name="Kandassamy Y."/>
            <person name="Chantal I."/>
            <person name="Bensaid A."/>
            <person name="Coissac E."/>
            <person name="Vachiery N."/>
            <person name="Demaille J."/>
            <person name="Martinez D."/>
        </authorList>
    </citation>
    <scope>NUCLEOTIDE SEQUENCE [LARGE SCALE GENOMIC DNA]</scope>
    <source>
        <strain>Welgevonden</strain>
    </source>
</reference>
<protein>
    <recommendedName>
        <fullName evidence="1">Ferredoxin--NADP reductase</fullName>
        <shortName evidence="1">FNR</shortName>
        <shortName evidence="1">Fd-NADP(+) reductase</shortName>
        <ecNumber evidence="1">1.18.1.2</ecNumber>
    </recommendedName>
</protein>
<proteinExistence type="inferred from homology"/>
<sequence length="337" mass="37352">MVDYVTDIVVIGAGPIGIFTVFQSGMLSMQCCVIDSLNEIGGQCVALYPEKPIYDIPAYPIITAKELINNLVEQSKPFDPQYLLGQVAEKIEEYIDYLLVKTNYGTVIQCKAIIIAAGSGAFGPNRLPVDNIIDFENKSVFYSVKQISDFYDKSVMIAGGGDSAADWAVELSKVTKQLYMVHRRKNFRCSPNTSLKLDDLFQRGKINLVVPYQIKQLCGKDGKLDYVVVKNITTSEELTLQVDYLLPFFGTSANLGPILNWGITISGYQIVIDPATCRTNRNRIYAVGDVSTYPGKIKLILTGFSESAMACHDIYHIVYPNSPLNFQYSTSKGIPKV</sequence>
<keyword id="KW-0274">FAD</keyword>
<keyword id="KW-0285">Flavoprotein</keyword>
<keyword id="KW-0521">NADP</keyword>
<keyword id="KW-0560">Oxidoreductase</keyword>
<name>FENR_EHRRW</name>
<evidence type="ECO:0000255" key="1">
    <source>
        <dbReference type="HAMAP-Rule" id="MF_01685"/>
    </source>
</evidence>